<dbReference type="EC" id="2.1.1.228" evidence="1"/>
<dbReference type="EMBL" id="GL882879">
    <property type="protein sequence ID" value="EGF83617.1"/>
    <property type="molecule type" value="Genomic_DNA"/>
</dbReference>
<dbReference type="RefSeq" id="XP_006676159.1">
    <property type="nucleotide sequence ID" value="XM_006676096.1"/>
</dbReference>
<dbReference type="SMR" id="F4NUJ6"/>
<dbReference type="FunCoup" id="F4NUJ6">
    <property type="interactions" value="353"/>
</dbReference>
<dbReference type="STRING" id="684364.F4NUJ6"/>
<dbReference type="GeneID" id="18241954"/>
<dbReference type="HOGENOM" id="CLU_022610_2_3_1"/>
<dbReference type="InParanoid" id="F4NUJ6"/>
<dbReference type="OMA" id="VGSHSQF"/>
<dbReference type="OrthoDB" id="408788at2759"/>
<dbReference type="Proteomes" id="UP000007241">
    <property type="component" value="Unassembled WGS sequence"/>
</dbReference>
<dbReference type="GO" id="GO:0005737">
    <property type="term" value="C:cytoplasm"/>
    <property type="evidence" value="ECO:0000318"/>
    <property type="project" value="GO_Central"/>
</dbReference>
<dbReference type="GO" id="GO:0005759">
    <property type="term" value="C:mitochondrial matrix"/>
    <property type="evidence" value="ECO:0007669"/>
    <property type="project" value="UniProtKB-SubCell"/>
</dbReference>
<dbReference type="GO" id="GO:0005634">
    <property type="term" value="C:nucleus"/>
    <property type="evidence" value="ECO:0007669"/>
    <property type="project" value="UniProtKB-SubCell"/>
</dbReference>
<dbReference type="GO" id="GO:0052906">
    <property type="term" value="F:tRNA (guanine(37)-N1)-methyltransferase activity"/>
    <property type="evidence" value="ECO:0007669"/>
    <property type="project" value="UniProtKB-UniRule"/>
</dbReference>
<dbReference type="GO" id="GO:0008175">
    <property type="term" value="F:tRNA methyltransferase activity"/>
    <property type="evidence" value="ECO:0000318"/>
    <property type="project" value="GO_Central"/>
</dbReference>
<dbReference type="GO" id="GO:0002939">
    <property type="term" value="P:tRNA N1-guanine methylation"/>
    <property type="evidence" value="ECO:0000318"/>
    <property type="project" value="GO_Central"/>
</dbReference>
<dbReference type="CDD" id="cd02440">
    <property type="entry name" value="AdoMet_MTases"/>
    <property type="match status" value="1"/>
</dbReference>
<dbReference type="FunFam" id="3.30.300.110:FF:000001">
    <property type="entry name" value="tRNA (guanine(37)-N1)-methyltransferase"/>
    <property type="match status" value="1"/>
</dbReference>
<dbReference type="Gene3D" id="3.30.300.110">
    <property type="entry name" value="Met-10+ protein-like domains"/>
    <property type="match status" value="1"/>
</dbReference>
<dbReference type="Gene3D" id="3.40.50.150">
    <property type="entry name" value="Vaccinia Virus protein VP39"/>
    <property type="match status" value="1"/>
</dbReference>
<dbReference type="HAMAP" id="MF_03152">
    <property type="entry name" value="TRM5"/>
    <property type="match status" value="1"/>
</dbReference>
<dbReference type="InterPro" id="IPR030382">
    <property type="entry name" value="MeTrfase_TRM5/TYW2"/>
</dbReference>
<dbReference type="InterPro" id="IPR029063">
    <property type="entry name" value="SAM-dependent_MTases_sf"/>
</dbReference>
<dbReference type="InterPro" id="IPR056743">
    <property type="entry name" value="TRM5-TYW2-like_MTfase"/>
</dbReference>
<dbReference type="InterPro" id="IPR056744">
    <property type="entry name" value="TRM5/TYW2-like_N"/>
</dbReference>
<dbReference type="InterPro" id="IPR025792">
    <property type="entry name" value="tRNA_Gua_MeTrfase_euk"/>
</dbReference>
<dbReference type="PANTHER" id="PTHR23245:SF43">
    <property type="entry name" value="TRNA (GUANINE(37)-N1)-METHYLTRANSFERASE 2"/>
    <property type="match status" value="1"/>
</dbReference>
<dbReference type="PANTHER" id="PTHR23245">
    <property type="entry name" value="TRNA METHYLTRANSFERASE"/>
    <property type="match status" value="1"/>
</dbReference>
<dbReference type="Pfam" id="PF02475">
    <property type="entry name" value="TRM5-TYW2_MTfase"/>
    <property type="match status" value="1"/>
</dbReference>
<dbReference type="Pfam" id="PF25133">
    <property type="entry name" value="TYW2_N_2"/>
    <property type="match status" value="1"/>
</dbReference>
<dbReference type="SUPFAM" id="SSF53335">
    <property type="entry name" value="S-adenosyl-L-methionine-dependent methyltransferases"/>
    <property type="match status" value="1"/>
</dbReference>
<dbReference type="PROSITE" id="PS51684">
    <property type="entry name" value="SAM_MT_TRM5_TYW2"/>
    <property type="match status" value="1"/>
</dbReference>
<keyword id="KW-0963">Cytoplasm</keyword>
<keyword id="KW-0489">Methyltransferase</keyword>
<keyword id="KW-0496">Mitochondrion</keyword>
<keyword id="KW-0539">Nucleus</keyword>
<keyword id="KW-1185">Reference proteome</keyword>
<keyword id="KW-0949">S-adenosyl-L-methionine</keyword>
<keyword id="KW-0808">Transferase</keyword>
<keyword id="KW-0819">tRNA processing</keyword>
<proteinExistence type="inferred from homology"/>
<accession>F4NUJ6</accession>
<sequence>MKYIFAPPANKGLQQLNHALFESSHTLPALKIPAHASGIAMETLRSHILVAPRLRTIVDDPTDKKWRLLLLDPSMEASEINDLPNPLKEFALKHEAKLVKHTIELKYDYWTSDQVLRSILPDEMETPGAFETVGHIAHLNLRDRYQPFKHIIGQVILDKSSHIKTVVNKLDNIDHTFRFFQMEILAGINDMNAKLKEGGCFFHFDFSKVYWNSRLQGEHDRIIKLFGQNDLICDVFAGVGPFALPAAKHKRCVVFANDLNPQSFKYLMENIKLNKLETRILPFNMDGRQFIKQSLEDLNNPAIWNKITKQKPTSNDKKRNRKVESPTVAPLTDQPAISGIRHFKHYVMNLPATAIEFLDAFHGLYSGMRDVIMDSDLPTIHCHCFSNAKDVKADVIERVERVIGMPLGSNLIMVHSVRTVAPNKDMLCISFRLPSALAFAEPKILGKRKGLETEENLVSQSDVSKSSDNILEKDT</sequence>
<comment type="function">
    <text evidence="1">Specifically methylates the N1 position of guanosine-37 in various cytoplasmic and mitochondrial tRNAs. Methylation is not dependent on the nature of the nucleoside 5' of the target nucleoside. This is the first step in the biosynthesis of wybutosine (yW), a modified base adjacent to the anticodon of tRNAs and required for accurate decoding.</text>
</comment>
<comment type="catalytic activity">
    <reaction evidence="1">
        <text>guanosine(37) in tRNA + S-adenosyl-L-methionine = N(1)-methylguanosine(37) in tRNA + S-adenosyl-L-homocysteine + H(+)</text>
        <dbReference type="Rhea" id="RHEA:36899"/>
        <dbReference type="Rhea" id="RHEA-COMP:10145"/>
        <dbReference type="Rhea" id="RHEA-COMP:10147"/>
        <dbReference type="ChEBI" id="CHEBI:15378"/>
        <dbReference type="ChEBI" id="CHEBI:57856"/>
        <dbReference type="ChEBI" id="CHEBI:59789"/>
        <dbReference type="ChEBI" id="CHEBI:73542"/>
        <dbReference type="ChEBI" id="CHEBI:74269"/>
        <dbReference type="EC" id="2.1.1.228"/>
    </reaction>
</comment>
<comment type="subunit">
    <text evidence="1">Monomer.</text>
</comment>
<comment type="subcellular location">
    <subcellularLocation>
        <location evidence="1">Mitochondrion matrix</location>
    </subcellularLocation>
    <subcellularLocation>
        <location evidence="1">Nucleus</location>
    </subcellularLocation>
    <subcellularLocation>
        <location evidence="1">Cytoplasm</location>
    </subcellularLocation>
    <text evidence="1">Predominantly in the mitochondria and in the nucleus.</text>
</comment>
<comment type="similarity">
    <text evidence="3">Belongs to the class I-like SAM-binding methyltransferase superfamily. TRM5/TYW2 family.</text>
</comment>
<feature type="chain" id="PRO_0000414159" description="tRNA (guanine(37)-N(1))-methyltransferase">
    <location>
        <begin position="1"/>
        <end position="475"/>
    </location>
</feature>
<feature type="region of interest" description="Disordered" evidence="2">
    <location>
        <begin position="306"/>
        <end position="328"/>
    </location>
</feature>
<feature type="region of interest" description="Disordered" evidence="2">
    <location>
        <begin position="456"/>
        <end position="475"/>
    </location>
</feature>
<feature type="compositionally biased region" description="Polar residues" evidence="2">
    <location>
        <begin position="456"/>
        <end position="469"/>
    </location>
</feature>
<feature type="binding site" evidence="1">
    <location>
        <position position="219"/>
    </location>
    <ligand>
        <name>S-adenosyl-L-methionine</name>
        <dbReference type="ChEBI" id="CHEBI:59789"/>
    </ligand>
</feature>
<feature type="binding site" evidence="1">
    <location>
        <begin position="258"/>
        <end position="259"/>
    </location>
    <ligand>
        <name>S-adenosyl-L-methionine</name>
        <dbReference type="ChEBI" id="CHEBI:59789"/>
    </ligand>
</feature>
<feature type="binding site" evidence="1">
    <location>
        <begin position="286"/>
        <end position="287"/>
    </location>
    <ligand>
        <name>S-adenosyl-L-methionine</name>
        <dbReference type="ChEBI" id="CHEBI:59789"/>
    </ligand>
</feature>
<feature type="binding site" evidence="1">
    <location>
        <position position="349"/>
    </location>
    <ligand>
        <name>S-adenosyl-L-methionine</name>
        <dbReference type="ChEBI" id="CHEBI:59789"/>
    </ligand>
</feature>
<gene>
    <name evidence="1" type="primary">TRM5</name>
    <name type="ORF">BATDEDRAFT_85132</name>
</gene>
<name>TRM5_BATDJ</name>
<organism>
    <name type="scientific">Batrachochytrium dendrobatidis (strain JAM81 / FGSC 10211)</name>
    <name type="common">Frog chytrid fungus</name>
    <dbReference type="NCBI Taxonomy" id="684364"/>
    <lineage>
        <taxon>Eukaryota</taxon>
        <taxon>Fungi</taxon>
        <taxon>Fungi incertae sedis</taxon>
        <taxon>Chytridiomycota</taxon>
        <taxon>Chytridiomycota incertae sedis</taxon>
        <taxon>Chytridiomycetes</taxon>
        <taxon>Rhizophydiales</taxon>
        <taxon>Rhizophydiales incertae sedis</taxon>
        <taxon>Batrachochytrium</taxon>
    </lineage>
</organism>
<evidence type="ECO:0000255" key="1">
    <source>
        <dbReference type="HAMAP-Rule" id="MF_03152"/>
    </source>
</evidence>
<evidence type="ECO:0000256" key="2">
    <source>
        <dbReference type="SAM" id="MobiDB-lite"/>
    </source>
</evidence>
<evidence type="ECO:0000305" key="3"/>
<protein>
    <recommendedName>
        <fullName evidence="1">tRNA (guanine(37)-N(1))-methyltransferase</fullName>
        <ecNumber evidence="1">2.1.1.228</ecNumber>
    </recommendedName>
    <alternativeName>
        <fullName evidence="1">M1G-methyltransferase</fullName>
    </alternativeName>
    <alternativeName>
        <fullName evidence="1">tRNA [GM37] methyltransferase</fullName>
    </alternativeName>
    <alternativeName>
        <fullName evidence="1">tRNA methyltransferase 5</fullName>
    </alternativeName>
</protein>
<reference key="1">
    <citation type="submission" date="2009-12" db="EMBL/GenBank/DDBJ databases">
        <title>The draft genome of Batrachochytrium dendrobatidis.</title>
        <authorList>
            <consortium name="US DOE Joint Genome Institute (JGI-PGF)"/>
            <person name="Kuo A."/>
            <person name="Salamov A."/>
            <person name="Schmutz J."/>
            <person name="Lucas S."/>
            <person name="Pitluck S."/>
            <person name="Rosenblum E."/>
            <person name="Stajich J."/>
            <person name="Eisen M."/>
            <person name="Grigoriev I.V."/>
        </authorList>
    </citation>
    <scope>NUCLEOTIDE SEQUENCE [LARGE SCALE GENOMIC DNA]</scope>
    <source>
        <strain>JAM81 / FGSC 10211</strain>
    </source>
</reference>